<reference key="1">
    <citation type="journal article" date="1980" name="Nucleic Acids Res.">
        <title>Conformational alteration of mRNA structure and the posttranscriptional regulation of erythromycin-induced drug resistance.</title>
        <authorList>
            <person name="Gryczan T.J."/>
            <person name="Grandi G."/>
            <person name="Hahn J."/>
            <person name="Grandi R."/>
            <person name="Dubnau D."/>
        </authorList>
    </citation>
    <scope>NUCLEOTIDE SEQUENCE [GENOMIC DNA]</scope>
    <source>
        <plasmid>pE194</plasmid>
    </source>
</reference>
<reference key="2">
    <citation type="journal article" date="1980" name="Proc. Natl. Acad. Sci. U.S.A.">
        <title>Posttranscriptional modification of mRNA conformation: mechanism that regulates erythromycin-induced resistance.</title>
        <authorList>
            <person name="Horinouchi S."/>
            <person name="Weisblum B."/>
        </authorList>
    </citation>
    <scope>NUCLEOTIDE SEQUENCE [GENOMIC DNA]</scope>
    <source>
        <plasmid>pE194</plasmid>
    </source>
</reference>
<reference key="3">
    <citation type="journal article" date="1988" name="J. Gen. Microbiol.">
        <title>The nucleotide sequence of Staphylococcus aureus plasmid pT48 conferring inducible macrolide-lincosamide-streptogramin B resistance and comparison with similar plasmids expressing constitutive resistance.</title>
        <authorList>
            <person name="Catchpole I."/>
            <person name="Thomas C."/>
            <person name="Davies A."/>
            <person name="Dyke K.G.H."/>
        </authorList>
    </citation>
    <scope>NUCLEOTIDE SEQUENCE [GENOMIC DNA] OF 1-48</scope>
    <source>
        <plasmid>pT48</plasmid>
    </source>
</reference>
<reference key="4">
    <citation type="journal article" date="1990" name="FEMS Microbiol. Lett.">
        <title>A Staphylococcus aureus plasmid that specifies constitutive macrolide-lincosamide-streptogramin B resistance contains a novel deletion in the ermC attenuator.</title>
        <authorList>
            <person name="Catchpole I."/>
            <person name="Dyke K.G.H."/>
        </authorList>
    </citation>
    <scope>NUCLEOTIDE SEQUENCE [GENOMIC DNA] OF 1-40</scope>
    <source>
        <plasmid>pA22</plasmid>
    </source>
</reference>
<reference key="5">
    <citation type="journal article" date="1985" name="J. Mol. Biol.">
        <title>Messenger RNA from Staphylococcus aureus that specifies macrolide-lincosamide-streptogramin resistance. Demonstration of its conformations and of the leader peptide it encodes.</title>
        <authorList>
            <person name="Mayford M."/>
            <person name="Weisblum B."/>
        </authorList>
    </citation>
    <scope>NUCLEOTIDE SEQUENCE [GENOMIC DNA] OF 1-11</scope>
    <source>
        <plasmid>pE194</plasmid>
    </source>
</reference>
<name>ERMC1_STAAU</name>
<accession>P02979</accession>
<keyword id="KW-0046">Antibiotic resistance</keyword>
<keyword id="KW-0489">Methyltransferase</keyword>
<keyword id="KW-0614">Plasmid</keyword>
<keyword id="KW-0694">RNA-binding</keyword>
<keyword id="KW-0949">S-adenosyl-L-methionine</keyword>
<keyword id="KW-0808">Transferase</keyword>
<geneLocation type="plasmid">
    <name>pE194</name>
</geneLocation>
<geneLocation type="plasmid">
    <name>pT48</name>
</geneLocation>
<geneLocation type="plasmid">
    <name>pA22</name>
</geneLocation>
<proteinExistence type="evidence at transcript level"/>
<dbReference type="EC" id="2.1.1.184"/>
<dbReference type="EMBL" id="V01278">
    <property type="protein sequence ID" value="CAA24591.1"/>
    <property type="molecule type" value="Genomic_DNA"/>
</dbReference>
<dbReference type="EMBL" id="M37841">
    <property type="protein sequence ID" value="AAA98226.1"/>
    <property type="molecule type" value="Genomic_DNA"/>
</dbReference>
<dbReference type="EMBL" id="X54338">
    <property type="protein sequence ID" value="CAA38227.1"/>
    <property type="molecule type" value="Genomic_DNA"/>
</dbReference>
<dbReference type="PIR" id="A93717">
    <property type="entry name" value="YESA9E"/>
</dbReference>
<dbReference type="RefSeq" id="YP_009060503.1">
    <property type="nucleotide sequence ID" value="NC_024964.1"/>
</dbReference>
<dbReference type="RefSeq" id="YP_025321.1">
    <property type="nucleotide sequence ID" value="NC_005908.1"/>
</dbReference>
<dbReference type="SMR" id="P02979"/>
<dbReference type="BindingDB" id="P02979"/>
<dbReference type="ChEMBL" id="CHEMBL4295563"/>
<dbReference type="GO" id="GO:0005829">
    <property type="term" value="C:cytosol"/>
    <property type="evidence" value="ECO:0007669"/>
    <property type="project" value="TreeGrafter"/>
</dbReference>
<dbReference type="GO" id="GO:0052910">
    <property type="term" value="F:23S rRNA (adenine(2085)-N(6))-dimethyltransferase activity"/>
    <property type="evidence" value="ECO:0007669"/>
    <property type="project" value="UniProtKB-EC"/>
</dbReference>
<dbReference type="GO" id="GO:0003723">
    <property type="term" value="F:RNA binding"/>
    <property type="evidence" value="ECO:0007669"/>
    <property type="project" value="UniProtKB-KW"/>
</dbReference>
<dbReference type="GO" id="GO:0000179">
    <property type="term" value="F:rRNA (adenine-N6,N6-)-dimethyltransferase activity"/>
    <property type="evidence" value="ECO:0007669"/>
    <property type="project" value="InterPro"/>
</dbReference>
<dbReference type="GO" id="GO:0046677">
    <property type="term" value="P:response to antibiotic"/>
    <property type="evidence" value="ECO:0007669"/>
    <property type="project" value="UniProtKB-KW"/>
</dbReference>
<dbReference type="CDD" id="cd02440">
    <property type="entry name" value="AdoMet_MTases"/>
    <property type="match status" value="1"/>
</dbReference>
<dbReference type="Gene3D" id="1.10.8.100">
    <property type="entry name" value="Ribosomal RNA adenine dimethylase-like, domain 2"/>
    <property type="match status" value="1"/>
</dbReference>
<dbReference type="Gene3D" id="3.40.50.150">
    <property type="entry name" value="Vaccinia Virus protein VP39"/>
    <property type="match status" value="1"/>
</dbReference>
<dbReference type="InterPro" id="IPR001737">
    <property type="entry name" value="KsgA/Erm"/>
</dbReference>
<dbReference type="InterPro" id="IPR023165">
    <property type="entry name" value="rRNA_Ade_diMease-like_C"/>
</dbReference>
<dbReference type="InterPro" id="IPR020596">
    <property type="entry name" value="rRNA_Ade_Mease_Trfase_CS"/>
</dbReference>
<dbReference type="InterPro" id="IPR020598">
    <property type="entry name" value="rRNA_Ade_methylase_Trfase_N"/>
</dbReference>
<dbReference type="InterPro" id="IPR029063">
    <property type="entry name" value="SAM-dependent_MTases_sf"/>
</dbReference>
<dbReference type="NCBIfam" id="NF000499">
    <property type="entry name" value="Erm23S_rRNA_broad"/>
    <property type="match status" value="1"/>
</dbReference>
<dbReference type="NCBIfam" id="NF012219">
    <property type="entry name" value="erm_C_23S_MT"/>
    <property type="match status" value="1"/>
</dbReference>
<dbReference type="PANTHER" id="PTHR11727">
    <property type="entry name" value="DIMETHYLADENOSINE TRANSFERASE"/>
    <property type="match status" value="1"/>
</dbReference>
<dbReference type="PANTHER" id="PTHR11727:SF7">
    <property type="entry name" value="DIMETHYLADENOSINE TRANSFERASE-RELATED"/>
    <property type="match status" value="1"/>
</dbReference>
<dbReference type="Pfam" id="PF00398">
    <property type="entry name" value="RrnaAD"/>
    <property type="match status" value="1"/>
</dbReference>
<dbReference type="SMART" id="SM00650">
    <property type="entry name" value="rADc"/>
    <property type="match status" value="1"/>
</dbReference>
<dbReference type="SUPFAM" id="SSF53335">
    <property type="entry name" value="S-adenosyl-L-methionine-dependent methyltransferases"/>
    <property type="match status" value="1"/>
</dbReference>
<dbReference type="PROSITE" id="PS01131">
    <property type="entry name" value="RRNA_A_DIMETH"/>
    <property type="match status" value="1"/>
</dbReference>
<dbReference type="PROSITE" id="PS51689">
    <property type="entry name" value="SAM_RNA_A_N6_MT"/>
    <property type="match status" value="1"/>
</dbReference>
<organism>
    <name type="scientific">Staphylococcus aureus</name>
    <dbReference type="NCBI Taxonomy" id="1280"/>
    <lineage>
        <taxon>Bacteria</taxon>
        <taxon>Bacillati</taxon>
        <taxon>Bacillota</taxon>
        <taxon>Bacilli</taxon>
        <taxon>Bacillales</taxon>
        <taxon>Staphylococcaceae</taxon>
        <taxon>Staphylococcus</taxon>
    </lineage>
</organism>
<feature type="chain" id="PRO_0000101682" description="rRNA adenine N-6-methyltransferase">
    <location>
        <begin position="1"/>
        <end position="244"/>
    </location>
</feature>
<feature type="binding site" evidence="1">
    <location>
        <position position="11"/>
    </location>
    <ligand>
        <name>S-adenosyl-L-methionine</name>
        <dbReference type="ChEBI" id="CHEBI:59789"/>
    </ligand>
</feature>
<feature type="binding site" evidence="1">
    <location>
        <position position="13"/>
    </location>
    <ligand>
        <name>S-adenosyl-L-methionine</name>
        <dbReference type="ChEBI" id="CHEBI:59789"/>
    </ligand>
</feature>
<feature type="binding site" evidence="1">
    <location>
        <position position="38"/>
    </location>
    <ligand>
        <name>S-adenosyl-L-methionine</name>
        <dbReference type="ChEBI" id="CHEBI:59789"/>
    </ligand>
</feature>
<feature type="binding site" evidence="1">
    <location>
        <position position="59"/>
    </location>
    <ligand>
        <name>S-adenosyl-L-methionine</name>
        <dbReference type="ChEBI" id="CHEBI:59789"/>
    </ligand>
</feature>
<feature type="binding site" evidence="1">
    <location>
        <position position="84"/>
    </location>
    <ligand>
        <name>S-adenosyl-L-methionine</name>
        <dbReference type="ChEBI" id="CHEBI:59789"/>
    </ligand>
</feature>
<feature type="binding site" evidence="1">
    <location>
        <position position="101"/>
    </location>
    <ligand>
        <name>S-adenosyl-L-methionine</name>
        <dbReference type="ChEBI" id="CHEBI:59789"/>
    </ligand>
</feature>
<gene>
    <name type="primary">ermC</name>
</gene>
<evidence type="ECO:0000255" key="1">
    <source>
        <dbReference type="PROSITE-ProRule" id="PRU01026"/>
    </source>
</evidence>
<comment type="function">
    <text>This protein produces a dimethylation of the adenine residue at position 2085 in 23S rRNA, resulting in reduced affinity between ribosomes and macrolide-lincosamide-streptogramin B antibiotics.</text>
</comment>
<comment type="catalytic activity">
    <reaction>
        <text>adenosine(2085) in 23S rRNA + 2 S-adenosyl-L-methionine = N(6)-dimethyladenosine(2085) in 23S rRNA + 2 S-adenosyl-L-homocysteine + 2 H(+)</text>
        <dbReference type="Rhea" id="RHEA:42784"/>
        <dbReference type="Rhea" id="RHEA-COMP:10237"/>
        <dbReference type="Rhea" id="RHEA-COMP:10238"/>
        <dbReference type="ChEBI" id="CHEBI:15378"/>
        <dbReference type="ChEBI" id="CHEBI:57856"/>
        <dbReference type="ChEBI" id="CHEBI:59789"/>
        <dbReference type="ChEBI" id="CHEBI:74411"/>
        <dbReference type="ChEBI" id="CHEBI:74493"/>
        <dbReference type="EC" id="2.1.1.184"/>
    </reaction>
</comment>
<comment type="induction">
    <text>By erythromycin.</text>
</comment>
<comment type="similarity">
    <text evidence="1">Belongs to the class I-like SAM-binding methyltransferase superfamily. rRNA adenine N(6)-methyltransferase family.</text>
</comment>
<protein>
    <recommendedName>
        <fullName>rRNA adenine N-6-methyltransferase</fullName>
        <ecNumber>2.1.1.184</ecNumber>
    </recommendedName>
    <alternativeName>
        <fullName>Erythromycin resistance protein</fullName>
    </alternativeName>
    <alternativeName>
        <fullName>Macrolide-lincosamide-streptogramin B resistance protein</fullName>
    </alternativeName>
</protein>
<sequence>MNEKNIKHSQNFITSKHNIDKIMTNIRLNEHDNIFEIGSGKGHFTLELVKRCNFVTAIEIDHKLCKTTENKLVDHDNFQVLNKDILQFKFPKNQSYKIYGNIPYNISTDIIRKIVFDSIANEIYLIVEYGFAKRLLNTKRSLALLLMAEVDISILSMVPREYFHPKPKVNSSLIRLSRKKSRISHKDKQKYNYFVMKWVNKEYKKIFTKNQFNNSLKHAGIDDLNNISFEQFLSLFNSYKLFNK</sequence>